<comment type="catalytic activity">
    <reaction evidence="1">
        <text>tRNA(Cys) + L-cysteine + ATP = L-cysteinyl-tRNA(Cys) + AMP + diphosphate</text>
        <dbReference type="Rhea" id="RHEA:17773"/>
        <dbReference type="Rhea" id="RHEA-COMP:9661"/>
        <dbReference type="Rhea" id="RHEA-COMP:9679"/>
        <dbReference type="ChEBI" id="CHEBI:30616"/>
        <dbReference type="ChEBI" id="CHEBI:33019"/>
        <dbReference type="ChEBI" id="CHEBI:35235"/>
        <dbReference type="ChEBI" id="CHEBI:78442"/>
        <dbReference type="ChEBI" id="CHEBI:78517"/>
        <dbReference type="ChEBI" id="CHEBI:456215"/>
        <dbReference type="EC" id="6.1.1.16"/>
    </reaction>
</comment>
<comment type="cofactor">
    <cofactor evidence="1">
        <name>Zn(2+)</name>
        <dbReference type="ChEBI" id="CHEBI:29105"/>
    </cofactor>
    <text evidence="1">Binds 1 zinc ion per subunit.</text>
</comment>
<comment type="subunit">
    <text evidence="1">Monomer.</text>
</comment>
<comment type="subcellular location">
    <subcellularLocation>
        <location evidence="1">Cytoplasm</location>
    </subcellularLocation>
</comment>
<comment type="similarity">
    <text evidence="1">Belongs to the class-I aminoacyl-tRNA synthetase family.</text>
</comment>
<accession>Q8EX28</accession>
<feature type="chain" id="PRO_0000159432" description="Cysteine--tRNA ligase">
    <location>
        <begin position="1"/>
        <end position="439"/>
    </location>
</feature>
<feature type="short sequence motif" description="'HIGH' region">
    <location>
        <begin position="28"/>
        <end position="38"/>
    </location>
</feature>
<feature type="short sequence motif" description="'KMSKS' region">
    <location>
        <begin position="263"/>
        <end position="267"/>
    </location>
</feature>
<feature type="binding site" evidence="1">
    <location>
        <position position="26"/>
    </location>
    <ligand>
        <name>Zn(2+)</name>
        <dbReference type="ChEBI" id="CHEBI:29105"/>
    </ligand>
</feature>
<feature type="binding site" evidence="1">
    <location>
        <position position="206"/>
    </location>
    <ligand>
        <name>Zn(2+)</name>
        <dbReference type="ChEBI" id="CHEBI:29105"/>
    </ligand>
</feature>
<feature type="binding site" evidence="1">
    <location>
        <position position="231"/>
    </location>
    <ligand>
        <name>Zn(2+)</name>
        <dbReference type="ChEBI" id="CHEBI:29105"/>
    </ligand>
</feature>
<feature type="binding site" evidence="1">
    <location>
        <position position="235"/>
    </location>
    <ligand>
        <name>Zn(2+)</name>
        <dbReference type="ChEBI" id="CHEBI:29105"/>
    </ligand>
</feature>
<feature type="binding site" evidence="1">
    <location>
        <position position="266"/>
    </location>
    <ligand>
        <name>ATP</name>
        <dbReference type="ChEBI" id="CHEBI:30616"/>
    </ligand>
</feature>
<organism>
    <name type="scientific">Malacoplasma penetrans (strain HF-2)</name>
    <name type="common">Mycoplasma penetrans</name>
    <dbReference type="NCBI Taxonomy" id="272633"/>
    <lineage>
        <taxon>Bacteria</taxon>
        <taxon>Bacillati</taxon>
        <taxon>Mycoplasmatota</taxon>
        <taxon>Mycoplasmoidales</taxon>
        <taxon>Mycoplasmoidaceae</taxon>
        <taxon>Malacoplasma</taxon>
    </lineage>
</organism>
<sequence length="439" mass="51621">MKIYDFVSKTDKEVSLDKKNIKMYVCGPTVYNHVHIGNLRPIITFDVLNRLFLELGYNVTFIHNITDIDDKIVNKAKEENIGELELSSYYETQYFDILKTINIHTSNMKFPRVSDHIKDIENYIQKIVNNKFAYLVDGDVYFDTTKSNQYGKISNKKLDELLVGDKSEDNLKKNNPQDFALWKQTTIGLNWDLKFSTGRPGWHTECSCLINKYLGDQIDIHGGGIDLKFPHHENENIQNIAVNNKDLARIWMHVGHLNINNQKMSKSLSNFILAKDLLSEYNTNTVRWFFYQTSYSNPLNFTTENLINSKNQLENIIYNLNIFKSHLIIEQKYNEKNLEFDKSNLIELTNNFNLPNIVSFIEEKIKYSSILLRNKNFEELNKLHFNLSYLLTKILGIIHVNLFDDEAIELLNKWNKLKQEKNFSESDKYRKLLMEKKLL</sequence>
<name>SYC_MALP2</name>
<protein>
    <recommendedName>
        <fullName evidence="1">Cysteine--tRNA ligase</fullName>
        <ecNumber evidence="1">6.1.1.16</ecNumber>
    </recommendedName>
    <alternativeName>
        <fullName evidence="1">Cysteinyl-tRNA synthetase</fullName>
        <shortName evidence="1">CysRS</shortName>
    </alternativeName>
</protein>
<proteinExistence type="inferred from homology"/>
<reference key="1">
    <citation type="journal article" date="2002" name="Nucleic Acids Res.">
        <title>The complete genomic sequence of Mycoplasma penetrans, an intracellular bacterial pathogen in humans.</title>
        <authorList>
            <person name="Sasaki Y."/>
            <person name="Ishikawa J."/>
            <person name="Yamashita A."/>
            <person name="Oshima K."/>
            <person name="Kenri T."/>
            <person name="Furuya K."/>
            <person name="Yoshino C."/>
            <person name="Horino A."/>
            <person name="Shiba T."/>
            <person name="Sasaki T."/>
            <person name="Hattori M."/>
        </authorList>
    </citation>
    <scope>NUCLEOTIDE SEQUENCE [LARGE SCALE GENOMIC DNA]</scope>
    <source>
        <strain>HF-2</strain>
    </source>
</reference>
<evidence type="ECO:0000255" key="1">
    <source>
        <dbReference type="HAMAP-Rule" id="MF_00041"/>
    </source>
</evidence>
<dbReference type="EC" id="6.1.1.16" evidence="1"/>
<dbReference type="EMBL" id="BA000026">
    <property type="protein sequence ID" value="BAC43812.1"/>
    <property type="molecule type" value="Genomic_DNA"/>
</dbReference>
<dbReference type="RefSeq" id="WP_011076848.1">
    <property type="nucleotide sequence ID" value="NC_004432.1"/>
</dbReference>
<dbReference type="SMR" id="Q8EX28"/>
<dbReference type="FunCoup" id="Q8EX28">
    <property type="interactions" value="216"/>
</dbReference>
<dbReference type="STRING" id="272633.gene:10731113"/>
<dbReference type="KEGG" id="mpe:MYPE220"/>
<dbReference type="eggNOG" id="COG0215">
    <property type="taxonomic scope" value="Bacteria"/>
</dbReference>
<dbReference type="HOGENOM" id="CLU_013528_0_0_14"/>
<dbReference type="InParanoid" id="Q8EX28"/>
<dbReference type="Proteomes" id="UP000002522">
    <property type="component" value="Chromosome"/>
</dbReference>
<dbReference type="GO" id="GO:0005829">
    <property type="term" value="C:cytosol"/>
    <property type="evidence" value="ECO:0007669"/>
    <property type="project" value="TreeGrafter"/>
</dbReference>
<dbReference type="GO" id="GO:0005524">
    <property type="term" value="F:ATP binding"/>
    <property type="evidence" value="ECO:0007669"/>
    <property type="project" value="UniProtKB-UniRule"/>
</dbReference>
<dbReference type="GO" id="GO:0004817">
    <property type="term" value="F:cysteine-tRNA ligase activity"/>
    <property type="evidence" value="ECO:0007669"/>
    <property type="project" value="UniProtKB-UniRule"/>
</dbReference>
<dbReference type="GO" id="GO:0008270">
    <property type="term" value="F:zinc ion binding"/>
    <property type="evidence" value="ECO:0007669"/>
    <property type="project" value="UniProtKB-UniRule"/>
</dbReference>
<dbReference type="GO" id="GO:0006423">
    <property type="term" value="P:cysteinyl-tRNA aminoacylation"/>
    <property type="evidence" value="ECO:0007669"/>
    <property type="project" value="UniProtKB-UniRule"/>
</dbReference>
<dbReference type="CDD" id="cd00672">
    <property type="entry name" value="CysRS_core"/>
    <property type="match status" value="1"/>
</dbReference>
<dbReference type="Gene3D" id="1.20.120.1910">
    <property type="entry name" value="Cysteine-tRNA ligase, C-terminal anti-codon recognition domain"/>
    <property type="match status" value="1"/>
</dbReference>
<dbReference type="Gene3D" id="3.40.50.620">
    <property type="entry name" value="HUPs"/>
    <property type="match status" value="1"/>
</dbReference>
<dbReference type="HAMAP" id="MF_00041">
    <property type="entry name" value="Cys_tRNA_synth"/>
    <property type="match status" value="1"/>
</dbReference>
<dbReference type="InterPro" id="IPR015803">
    <property type="entry name" value="Cys-tRNA-ligase"/>
</dbReference>
<dbReference type="InterPro" id="IPR024909">
    <property type="entry name" value="Cys-tRNA/MSH_ligase"/>
</dbReference>
<dbReference type="InterPro" id="IPR014729">
    <property type="entry name" value="Rossmann-like_a/b/a_fold"/>
</dbReference>
<dbReference type="InterPro" id="IPR032678">
    <property type="entry name" value="tRNA-synt_1_cat_dom"/>
</dbReference>
<dbReference type="InterPro" id="IPR009080">
    <property type="entry name" value="tRNAsynth_Ia_anticodon-bd"/>
</dbReference>
<dbReference type="NCBIfam" id="TIGR00435">
    <property type="entry name" value="cysS"/>
    <property type="match status" value="1"/>
</dbReference>
<dbReference type="PANTHER" id="PTHR10890:SF3">
    <property type="entry name" value="CYSTEINE--TRNA LIGASE, CYTOPLASMIC"/>
    <property type="match status" value="1"/>
</dbReference>
<dbReference type="PANTHER" id="PTHR10890">
    <property type="entry name" value="CYSTEINYL-TRNA SYNTHETASE"/>
    <property type="match status" value="1"/>
</dbReference>
<dbReference type="Pfam" id="PF01406">
    <property type="entry name" value="tRNA-synt_1e"/>
    <property type="match status" value="1"/>
</dbReference>
<dbReference type="PRINTS" id="PR00983">
    <property type="entry name" value="TRNASYNTHCYS"/>
</dbReference>
<dbReference type="SUPFAM" id="SSF47323">
    <property type="entry name" value="Anticodon-binding domain of a subclass of class I aminoacyl-tRNA synthetases"/>
    <property type="match status" value="1"/>
</dbReference>
<dbReference type="SUPFAM" id="SSF52374">
    <property type="entry name" value="Nucleotidylyl transferase"/>
    <property type="match status" value="1"/>
</dbReference>
<gene>
    <name evidence="1" type="primary">cysS</name>
    <name type="ordered locus">MYPE220</name>
</gene>
<keyword id="KW-0030">Aminoacyl-tRNA synthetase</keyword>
<keyword id="KW-0067">ATP-binding</keyword>
<keyword id="KW-0963">Cytoplasm</keyword>
<keyword id="KW-0436">Ligase</keyword>
<keyword id="KW-0479">Metal-binding</keyword>
<keyword id="KW-0547">Nucleotide-binding</keyword>
<keyword id="KW-0648">Protein biosynthesis</keyword>
<keyword id="KW-1185">Reference proteome</keyword>
<keyword id="KW-0862">Zinc</keyword>